<comment type="function">
    <text evidence="1">Binds directly to 23S ribosomal RNA and is necessary for the in vitro assembly process of the 50S ribosomal subunit. It is not involved in the protein synthesizing functions of that subunit.</text>
</comment>
<comment type="similarity">
    <text evidence="1">Belongs to the bacterial ribosomal protein bL20 family.</text>
</comment>
<proteinExistence type="inferred from homology"/>
<name>RL20_METNO</name>
<dbReference type="EMBL" id="CP001349">
    <property type="protein sequence ID" value="ACL60395.1"/>
    <property type="molecule type" value="Genomic_DNA"/>
</dbReference>
<dbReference type="RefSeq" id="WP_015932001.1">
    <property type="nucleotide sequence ID" value="NC_011894.1"/>
</dbReference>
<dbReference type="SMR" id="B8IP77"/>
<dbReference type="STRING" id="460265.Mnod_5553"/>
<dbReference type="KEGG" id="mno:Mnod_5553"/>
<dbReference type="eggNOG" id="COG0292">
    <property type="taxonomic scope" value="Bacteria"/>
</dbReference>
<dbReference type="HOGENOM" id="CLU_123265_0_1_5"/>
<dbReference type="OrthoDB" id="9808966at2"/>
<dbReference type="Proteomes" id="UP000008207">
    <property type="component" value="Chromosome"/>
</dbReference>
<dbReference type="GO" id="GO:1990904">
    <property type="term" value="C:ribonucleoprotein complex"/>
    <property type="evidence" value="ECO:0007669"/>
    <property type="project" value="UniProtKB-KW"/>
</dbReference>
<dbReference type="GO" id="GO:0005840">
    <property type="term" value="C:ribosome"/>
    <property type="evidence" value="ECO:0007669"/>
    <property type="project" value="UniProtKB-KW"/>
</dbReference>
<dbReference type="GO" id="GO:0019843">
    <property type="term" value="F:rRNA binding"/>
    <property type="evidence" value="ECO:0007669"/>
    <property type="project" value="UniProtKB-UniRule"/>
</dbReference>
<dbReference type="GO" id="GO:0003735">
    <property type="term" value="F:structural constituent of ribosome"/>
    <property type="evidence" value="ECO:0007669"/>
    <property type="project" value="InterPro"/>
</dbReference>
<dbReference type="GO" id="GO:0000027">
    <property type="term" value="P:ribosomal large subunit assembly"/>
    <property type="evidence" value="ECO:0007669"/>
    <property type="project" value="UniProtKB-UniRule"/>
</dbReference>
<dbReference type="GO" id="GO:0006412">
    <property type="term" value="P:translation"/>
    <property type="evidence" value="ECO:0007669"/>
    <property type="project" value="InterPro"/>
</dbReference>
<dbReference type="CDD" id="cd07026">
    <property type="entry name" value="Ribosomal_L20"/>
    <property type="match status" value="1"/>
</dbReference>
<dbReference type="FunFam" id="1.10.1900.20:FF:000001">
    <property type="entry name" value="50S ribosomal protein L20"/>
    <property type="match status" value="1"/>
</dbReference>
<dbReference type="Gene3D" id="6.10.160.10">
    <property type="match status" value="1"/>
</dbReference>
<dbReference type="Gene3D" id="1.10.1900.20">
    <property type="entry name" value="Ribosomal protein L20"/>
    <property type="match status" value="1"/>
</dbReference>
<dbReference type="HAMAP" id="MF_00382">
    <property type="entry name" value="Ribosomal_bL20"/>
    <property type="match status" value="1"/>
</dbReference>
<dbReference type="InterPro" id="IPR005813">
    <property type="entry name" value="Ribosomal_bL20"/>
</dbReference>
<dbReference type="InterPro" id="IPR049946">
    <property type="entry name" value="RIBOSOMAL_L20_CS"/>
</dbReference>
<dbReference type="InterPro" id="IPR035566">
    <property type="entry name" value="Ribosomal_protein_bL20_C"/>
</dbReference>
<dbReference type="NCBIfam" id="TIGR01032">
    <property type="entry name" value="rplT_bact"/>
    <property type="match status" value="1"/>
</dbReference>
<dbReference type="PANTHER" id="PTHR10986">
    <property type="entry name" value="39S RIBOSOMAL PROTEIN L20"/>
    <property type="match status" value="1"/>
</dbReference>
<dbReference type="Pfam" id="PF00453">
    <property type="entry name" value="Ribosomal_L20"/>
    <property type="match status" value="1"/>
</dbReference>
<dbReference type="PRINTS" id="PR00062">
    <property type="entry name" value="RIBOSOMALL20"/>
</dbReference>
<dbReference type="SUPFAM" id="SSF74731">
    <property type="entry name" value="Ribosomal protein L20"/>
    <property type="match status" value="1"/>
</dbReference>
<dbReference type="PROSITE" id="PS00937">
    <property type="entry name" value="RIBOSOMAL_L20"/>
    <property type="match status" value="1"/>
</dbReference>
<evidence type="ECO:0000255" key="1">
    <source>
        <dbReference type="HAMAP-Rule" id="MF_00382"/>
    </source>
</evidence>
<evidence type="ECO:0000305" key="2"/>
<sequence length="125" mass="13954">MARVKRGVTSHAKHKKVLKAAKGYYGRRKNTIRIAKQAVEKGLQYAYRDRKNRKRSFRALWIQRLNAAVREHGLTYSRFIDGLAKAGIVVDRKALSELAIHEPAAFSAVVEKAKAALPAETAKAA</sequence>
<accession>B8IP77</accession>
<protein>
    <recommendedName>
        <fullName evidence="1">Large ribosomal subunit protein bL20</fullName>
    </recommendedName>
    <alternativeName>
        <fullName evidence="2">50S ribosomal protein L20</fullName>
    </alternativeName>
</protein>
<gene>
    <name evidence="1" type="primary">rplT</name>
    <name type="ordered locus">Mnod_5553</name>
</gene>
<reference key="1">
    <citation type="submission" date="2009-01" db="EMBL/GenBank/DDBJ databases">
        <title>Complete sequence of chromosome of Methylobacterium nodulans ORS 2060.</title>
        <authorList>
            <consortium name="US DOE Joint Genome Institute"/>
            <person name="Lucas S."/>
            <person name="Copeland A."/>
            <person name="Lapidus A."/>
            <person name="Glavina del Rio T."/>
            <person name="Dalin E."/>
            <person name="Tice H."/>
            <person name="Bruce D."/>
            <person name="Goodwin L."/>
            <person name="Pitluck S."/>
            <person name="Sims D."/>
            <person name="Brettin T."/>
            <person name="Detter J.C."/>
            <person name="Han C."/>
            <person name="Larimer F."/>
            <person name="Land M."/>
            <person name="Hauser L."/>
            <person name="Kyrpides N."/>
            <person name="Ivanova N."/>
            <person name="Marx C.J."/>
            <person name="Richardson P."/>
        </authorList>
    </citation>
    <scope>NUCLEOTIDE SEQUENCE [LARGE SCALE GENOMIC DNA]</scope>
    <source>
        <strain>LMG 21967 / CNCM I-2342 / ORS 2060</strain>
    </source>
</reference>
<organism>
    <name type="scientific">Methylobacterium nodulans (strain LMG 21967 / CNCM I-2342 / ORS 2060)</name>
    <dbReference type="NCBI Taxonomy" id="460265"/>
    <lineage>
        <taxon>Bacteria</taxon>
        <taxon>Pseudomonadati</taxon>
        <taxon>Pseudomonadota</taxon>
        <taxon>Alphaproteobacteria</taxon>
        <taxon>Hyphomicrobiales</taxon>
        <taxon>Methylobacteriaceae</taxon>
        <taxon>Methylobacterium</taxon>
    </lineage>
</organism>
<feature type="chain" id="PRO_1000193967" description="Large ribosomal subunit protein bL20">
    <location>
        <begin position="1"/>
        <end position="125"/>
    </location>
</feature>
<keyword id="KW-1185">Reference proteome</keyword>
<keyword id="KW-0687">Ribonucleoprotein</keyword>
<keyword id="KW-0689">Ribosomal protein</keyword>
<keyword id="KW-0694">RNA-binding</keyword>
<keyword id="KW-0699">rRNA-binding</keyword>